<geneLocation type="mitochondrion"/>
<dbReference type="EMBL" id="AF096619">
    <property type="protein sequence ID" value="AAD27791.1"/>
    <property type="molecule type" value="Genomic_DNA"/>
</dbReference>
<dbReference type="SMR" id="Q7J370"/>
<dbReference type="GO" id="GO:0005743">
    <property type="term" value="C:mitochondrial inner membrane"/>
    <property type="evidence" value="ECO:0007669"/>
    <property type="project" value="UniProtKB-SubCell"/>
</dbReference>
<dbReference type="GO" id="GO:0045275">
    <property type="term" value="C:respiratory chain complex III"/>
    <property type="evidence" value="ECO:0007669"/>
    <property type="project" value="InterPro"/>
</dbReference>
<dbReference type="GO" id="GO:0046872">
    <property type="term" value="F:metal ion binding"/>
    <property type="evidence" value="ECO:0007669"/>
    <property type="project" value="UniProtKB-KW"/>
</dbReference>
<dbReference type="GO" id="GO:0008121">
    <property type="term" value="F:ubiquinol-cytochrome-c reductase activity"/>
    <property type="evidence" value="ECO:0007669"/>
    <property type="project" value="InterPro"/>
</dbReference>
<dbReference type="GO" id="GO:0006122">
    <property type="term" value="P:mitochondrial electron transport, ubiquinol to cytochrome c"/>
    <property type="evidence" value="ECO:0007669"/>
    <property type="project" value="TreeGrafter"/>
</dbReference>
<dbReference type="CDD" id="cd00290">
    <property type="entry name" value="cytochrome_b_C"/>
    <property type="match status" value="1"/>
</dbReference>
<dbReference type="CDD" id="cd00284">
    <property type="entry name" value="Cytochrome_b_N"/>
    <property type="match status" value="1"/>
</dbReference>
<dbReference type="FunFam" id="1.20.810.10:FF:000002">
    <property type="entry name" value="Cytochrome b"/>
    <property type="match status" value="1"/>
</dbReference>
<dbReference type="Gene3D" id="1.20.810.10">
    <property type="entry name" value="Cytochrome Bc1 Complex, Chain C"/>
    <property type="match status" value="1"/>
</dbReference>
<dbReference type="InterPro" id="IPR005798">
    <property type="entry name" value="Cyt_b/b6_C"/>
</dbReference>
<dbReference type="InterPro" id="IPR036150">
    <property type="entry name" value="Cyt_b/b6_C_sf"/>
</dbReference>
<dbReference type="InterPro" id="IPR005797">
    <property type="entry name" value="Cyt_b/b6_N"/>
</dbReference>
<dbReference type="InterPro" id="IPR027387">
    <property type="entry name" value="Cytb/b6-like_sf"/>
</dbReference>
<dbReference type="InterPro" id="IPR030689">
    <property type="entry name" value="Cytochrome_b"/>
</dbReference>
<dbReference type="InterPro" id="IPR048260">
    <property type="entry name" value="Cytochrome_b_C_euk/bac"/>
</dbReference>
<dbReference type="InterPro" id="IPR048259">
    <property type="entry name" value="Cytochrome_b_N_euk/bac"/>
</dbReference>
<dbReference type="InterPro" id="IPR016174">
    <property type="entry name" value="Di-haem_cyt_TM"/>
</dbReference>
<dbReference type="PANTHER" id="PTHR19271">
    <property type="entry name" value="CYTOCHROME B"/>
    <property type="match status" value="1"/>
</dbReference>
<dbReference type="PANTHER" id="PTHR19271:SF16">
    <property type="entry name" value="CYTOCHROME B"/>
    <property type="match status" value="1"/>
</dbReference>
<dbReference type="Pfam" id="PF00032">
    <property type="entry name" value="Cytochrom_B_C"/>
    <property type="match status" value="1"/>
</dbReference>
<dbReference type="Pfam" id="PF00033">
    <property type="entry name" value="Cytochrome_B"/>
    <property type="match status" value="1"/>
</dbReference>
<dbReference type="PIRSF" id="PIRSF038885">
    <property type="entry name" value="COB"/>
    <property type="match status" value="1"/>
</dbReference>
<dbReference type="SUPFAM" id="SSF81648">
    <property type="entry name" value="a domain/subunit of cytochrome bc1 complex (Ubiquinol-cytochrome c reductase)"/>
    <property type="match status" value="1"/>
</dbReference>
<dbReference type="SUPFAM" id="SSF81342">
    <property type="entry name" value="Transmembrane di-heme cytochromes"/>
    <property type="match status" value="1"/>
</dbReference>
<dbReference type="PROSITE" id="PS51003">
    <property type="entry name" value="CYTB_CTER"/>
    <property type="match status" value="1"/>
</dbReference>
<dbReference type="PROSITE" id="PS51002">
    <property type="entry name" value="CYTB_NTER"/>
    <property type="match status" value="1"/>
</dbReference>
<name>CYB_KOBVA</name>
<feature type="chain" id="PRO_0000254699" description="Cytochrome b">
    <location>
        <begin position="1"/>
        <end position="379"/>
    </location>
</feature>
<feature type="transmembrane region" description="Helical" evidence="2">
    <location>
        <begin position="33"/>
        <end position="53"/>
    </location>
</feature>
<feature type="transmembrane region" description="Helical" evidence="2">
    <location>
        <begin position="77"/>
        <end position="98"/>
    </location>
</feature>
<feature type="transmembrane region" description="Helical" evidence="2">
    <location>
        <begin position="113"/>
        <end position="133"/>
    </location>
</feature>
<feature type="transmembrane region" description="Helical" evidence="2">
    <location>
        <begin position="178"/>
        <end position="198"/>
    </location>
</feature>
<feature type="transmembrane region" description="Helical" evidence="2">
    <location>
        <begin position="226"/>
        <end position="246"/>
    </location>
</feature>
<feature type="transmembrane region" description="Helical" evidence="2">
    <location>
        <begin position="288"/>
        <end position="308"/>
    </location>
</feature>
<feature type="transmembrane region" description="Helical" evidence="2">
    <location>
        <begin position="320"/>
        <end position="340"/>
    </location>
</feature>
<feature type="transmembrane region" description="Helical" evidence="2">
    <location>
        <begin position="347"/>
        <end position="367"/>
    </location>
</feature>
<feature type="binding site" description="axial binding residue" evidence="2">
    <location>
        <position position="83"/>
    </location>
    <ligand>
        <name>heme b</name>
        <dbReference type="ChEBI" id="CHEBI:60344"/>
        <label>b562</label>
    </ligand>
    <ligandPart>
        <name>Fe</name>
        <dbReference type="ChEBI" id="CHEBI:18248"/>
    </ligandPart>
</feature>
<feature type="binding site" description="axial binding residue" evidence="2">
    <location>
        <position position="97"/>
    </location>
    <ligand>
        <name>heme b</name>
        <dbReference type="ChEBI" id="CHEBI:60344"/>
        <label>b566</label>
    </ligand>
    <ligandPart>
        <name>Fe</name>
        <dbReference type="ChEBI" id="CHEBI:18248"/>
    </ligandPart>
</feature>
<feature type="binding site" description="axial binding residue" evidence="2">
    <location>
        <position position="182"/>
    </location>
    <ligand>
        <name>heme b</name>
        <dbReference type="ChEBI" id="CHEBI:60344"/>
        <label>b562</label>
    </ligand>
    <ligandPart>
        <name>Fe</name>
        <dbReference type="ChEBI" id="CHEBI:18248"/>
    </ligandPart>
</feature>
<feature type="binding site" description="axial binding residue" evidence="2">
    <location>
        <position position="196"/>
    </location>
    <ligand>
        <name>heme b</name>
        <dbReference type="ChEBI" id="CHEBI:60344"/>
        <label>b566</label>
    </ligand>
    <ligandPart>
        <name>Fe</name>
        <dbReference type="ChEBI" id="CHEBI:18248"/>
    </ligandPart>
</feature>
<feature type="binding site" evidence="2">
    <location>
        <position position="201"/>
    </location>
    <ligand>
        <name>a ubiquinone</name>
        <dbReference type="ChEBI" id="CHEBI:16389"/>
    </ligand>
</feature>
<keyword id="KW-0249">Electron transport</keyword>
<keyword id="KW-0349">Heme</keyword>
<keyword id="KW-0408">Iron</keyword>
<keyword id="KW-0472">Membrane</keyword>
<keyword id="KW-0479">Metal-binding</keyword>
<keyword id="KW-0496">Mitochondrion</keyword>
<keyword id="KW-0999">Mitochondrion inner membrane</keyword>
<keyword id="KW-0679">Respiratory chain</keyword>
<keyword id="KW-0812">Transmembrane</keyword>
<keyword id="KW-1133">Transmembrane helix</keyword>
<keyword id="KW-0813">Transport</keyword>
<keyword id="KW-0830">Ubiquinone</keyword>
<sequence>MTNMRKTHPLMKIVNNAFIDLPAPSNISSWWNFGSLLGICLILQILTGLFLAMHYTSDTITAFSSVTHICRDVNYGWIIRYMHANGASMFFICLFMHVGRGLYYGSYIFLETWNIGVILLFMTMATAFMGYVLPWGQMSFWGATVITNLLSAIPYIGTNLVEWIWGGFSVDKATLTRFFAFHFILPFIIAAIAMVHLLFLHETGSNNPTGISSDTDKIPFHPYYTIKDTLGALLLILVLMLLVLFAPDLLGDPDNYTPANPLNTPPHIKPEWYFLFAYAILRSIPNKLGGVLALVLSILILVFMPLLHMSKQRSMMFRPISQCLFWILAADLLTLTWIGGQPVEHPYIIIGQLASIMYFLLILVLMPMASTIENNLLKW</sequence>
<accession>Q7J370</accession>
<comment type="function">
    <text evidence="2">Component of the ubiquinol-cytochrome c reductase complex (complex III or cytochrome b-c1 complex) that is part of the mitochondrial respiratory chain. The b-c1 complex mediates electron transfer from ubiquinol to cytochrome c. Contributes to the generation of a proton gradient across the mitochondrial membrane that is then used for ATP synthesis.</text>
</comment>
<comment type="cofactor">
    <cofactor evidence="2">
        <name>heme b</name>
        <dbReference type="ChEBI" id="CHEBI:60344"/>
    </cofactor>
    <text evidence="2">Binds 2 heme b groups non-covalently.</text>
</comment>
<comment type="subunit">
    <text evidence="2">The cytochrome bc1 complex contains 11 subunits: 3 respiratory subunits (MT-CYB, CYC1 and UQCRFS1), 2 core proteins (UQCRC1 and UQCRC2) and 6 low-molecular weight proteins (UQCRH/QCR6, UQCRB/QCR7, UQCRQ/QCR8, UQCR10/QCR9, UQCR11/QCR10 and a cleavage product of UQCRFS1). This cytochrome bc1 complex then forms a dimer.</text>
</comment>
<comment type="subcellular location">
    <subcellularLocation>
        <location evidence="2">Mitochondrion inner membrane</location>
        <topology evidence="2">Multi-pass membrane protein</topology>
    </subcellularLocation>
</comment>
<comment type="miscellaneous">
    <text evidence="1">Heme 1 (or BL or b562) is low-potential and absorbs at about 562 nm, and heme 2 (or BH or b566) is high-potential and absorbs at about 566 nm.</text>
</comment>
<comment type="similarity">
    <text evidence="3 4">Belongs to the cytochrome b family.</text>
</comment>
<comment type="caution">
    <text evidence="2">The full-length protein contains only eight transmembrane helices, not nine as predicted by bioinformatics tools.</text>
</comment>
<evidence type="ECO:0000250" key="1"/>
<evidence type="ECO:0000250" key="2">
    <source>
        <dbReference type="UniProtKB" id="P00157"/>
    </source>
</evidence>
<evidence type="ECO:0000255" key="3">
    <source>
        <dbReference type="PROSITE-ProRule" id="PRU00967"/>
    </source>
</evidence>
<evidence type="ECO:0000255" key="4">
    <source>
        <dbReference type="PROSITE-ProRule" id="PRU00968"/>
    </source>
</evidence>
<protein>
    <recommendedName>
        <fullName>Cytochrome b</fullName>
    </recommendedName>
    <alternativeName>
        <fullName>Complex III subunit 3</fullName>
    </alternativeName>
    <alternativeName>
        <fullName>Complex III subunit III</fullName>
    </alternativeName>
    <alternativeName>
        <fullName>Cytochrome b-c1 complex subunit 3</fullName>
    </alternativeName>
    <alternativeName>
        <fullName>Ubiquinol-cytochrome-c reductase complex cytochrome b subunit</fullName>
    </alternativeName>
</protein>
<organism>
    <name type="scientific">Kobus vardonii</name>
    <name type="common">Puku antelope</name>
    <dbReference type="NCBI Taxonomy" id="59533"/>
    <lineage>
        <taxon>Eukaryota</taxon>
        <taxon>Metazoa</taxon>
        <taxon>Chordata</taxon>
        <taxon>Craniata</taxon>
        <taxon>Vertebrata</taxon>
        <taxon>Euteleostomi</taxon>
        <taxon>Mammalia</taxon>
        <taxon>Eutheria</taxon>
        <taxon>Laurasiatheria</taxon>
        <taxon>Artiodactyla</taxon>
        <taxon>Ruminantia</taxon>
        <taxon>Pecora</taxon>
        <taxon>Bovidae</taxon>
        <taxon>Reduncinae</taxon>
        <taxon>Kobus</taxon>
    </lineage>
</organism>
<reference key="1">
    <citation type="journal article" date="2001" name="J. Mammal. Evol.">
        <title>Molecular systematics and phylogenetics of the reduncini (Artiodactyla: Bovidae) inferred from the analysis of mitochondrial cytochrome b gene sequences.</title>
        <authorList>
            <person name="Birungi J."/>
            <person name="Arctander P."/>
        </authorList>
    </citation>
    <scope>NUCLEOTIDE SEQUENCE [GENOMIC DNA]</scope>
</reference>
<gene>
    <name type="primary">MT-CYB</name>
    <name type="synonym">COB</name>
    <name type="synonym">CYTB</name>
    <name type="synonym">MTCYB</name>
</gene>
<proteinExistence type="inferred from homology"/>